<protein>
    <recommendedName>
        <fullName>Phosphoinositide 3-kinase regulatory subunit 6</fullName>
    </recommendedName>
    <alternativeName>
        <fullName>Phosphoinositide 3-kinase gamma adapter protein of 87 kDa</fullName>
    </alternativeName>
    <alternativeName>
        <fullName>p84 PI3K adapter protein</fullName>
        <shortName>p84 PIKAP</shortName>
    </alternativeName>
    <alternativeName>
        <fullName>p87 PI3K adapter protein</fullName>
        <shortName>p87PIKAP</shortName>
    </alternativeName>
</protein>
<accession>Q5UE93</accession>
<accession>Q658R3</accession>
<comment type="function">
    <text evidence="3">Regulatory subunit of the PI3K gamma complex. Acts as an adapter to drive activation of PIK3CG by beta-gamma G protein dimers. The PIK3CG:PIK3R6 heterodimer is much less sensitive to beta-gamma G protein dimers than PIK3CG:PIK3R5 and its membrane recruitment and beta-gamma G protein dimer-dependent activation requires HRAS bound to PIK3CG. Recruits of the PI3K gamma complex to a PDE3B:RAPGEF3 signaling complex involved in angiogenesis; signaling seems to involve RRAS.</text>
</comment>
<comment type="subunit">
    <text evidence="1 3">Heterodimer of a catalytic subunit (PIK3CG) and a regulatory (PIK3R6) subunit. The binding of PIK3R6 to PIK3CG may exclude the binding of PIK3R5 to PIK3CG. Interacts with beta-gamma G protein dimers (By similarity). Interacts with PDE3B and RAPGEF3; form a signaling complex that regulates phosphatidylinositol 3-kinase gamma in angiogenesis (PubMed:21393242).</text>
</comment>
<comment type="interaction">
    <interactant intactId="EBI-6172907">
        <id>Q5UE93</id>
    </interactant>
    <interactant intactId="EBI-6172856">
        <id>Q13370</id>
        <label>PDE3B</label>
    </interactant>
    <organismsDiffer>false</organismsDiffer>
    <experiments>3</experiments>
</comment>
<comment type="subcellular location">
    <subcellularLocation>
        <location evidence="1">Cytoplasm</location>
    </subcellularLocation>
    <subcellularLocation>
        <location evidence="1">Cell membrane</location>
        <topology evidence="1">Peripheral membrane protein</topology>
    </subcellularLocation>
    <text evidence="1">Translocated to the plasma membrane in a Ras-dependent manner.</text>
</comment>
<name>PI3R6_HUMAN</name>
<reference key="1">
    <citation type="journal article" date="2006" name="J. Biol. Chem.">
        <title>Characterization of p87PIKAP, a novel regulatory subunit of phosphoinositide 3-kinase gamma that is highly expressed in heart and interacts with PDE3B.</title>
        <authorList>
            <person name="Voigt P."/>
            <person name="Dorner M.B."/>
            <person name="Schaefer M."/>
        </authorList>
    </citation>
    <scope>NUCLEOTIDE SEQUENCE [MRNA]</scope>
</reference>
<reference key="2">
    <citation type="journal article" date="2006" name="Nature">
        <title>DNA sequence of human chromosome 17 and analysis of rearrangement in the human lineage.</title>
        <authorList>
            <person name="Zody M.C."/>
            <person name="Garber M."/>
            <person name="Adams D.J."/>
            <person name="Sharpe T."/>
            <person name="Harrow J."/>
            <person name="Lupski J.R."/>
            <person name="Nicholson C."/>
            <person name="Searle S.M."/>
            <person name="Wilming L."/>
            <person name="Young S.K."/>
            <person name="Abouelleil A."/>
            <person name="Allen N.R."/>
            <person name="Bi W."/>
            <person name="Bloom T."/>
            <person name="Borowsky M.L."/>
            <person name="Bugalter B.E."/>
            <person name="Butler J."/>
            <person name="Chang J.L."/>
            <person name="Chen C.-K."/>
            <person name="Cook A."/>
            <person name="Corum B."/>
            <person name="Cuomo C.A."/>
            <person name="de Jong P.J."/>
            <person name="DeCaprio D."/>
            <person name="Dewar K."/>
            <person name="FitzGerald M."/>
            <person name="Gilbert J."/>
            <person name="Gibson R."/>
            <person name="Gnerre S."/>
            <person name="Goldstein S."/>
            <person name="Grafham D.V."/>
            <person name="Grocock R."/>
            <person name="Hafez N."/>
            <person name="Hagopian D.S."/>
            <person name="Hart E."/>
            <person name="Norman C.H."/>
            <person name="Humphray S."/>
            <person name="Jaffe D.B."/>
            <person name="Jones M."/>
            <person name="Kamal M."/>
            <person name="Khodiyar V.K."/>
            <person name="LaButti K."/>
            <person name="Laird G."/>
            <person name="Lehoczky J."/>
            <person name="Liu X."/>
            <person name="Lokyitsang T."/>
            <person name="Loveland J."/>
            <person name="Lui A."/>
            <person name="Macdonald P."/>
            <person name="Major J.E."/>
            <person name="Matthews L."/>
            <person name="Mauceli E."/>
            <person name="McCarroll S.A."/>
            <person name="Mihalev A.H."/>
            <person name="Mudge J."/>
            <person name="Nguyen C."/>
            <person name="Nicol R."/>
            <person name="O'Leary S.B."/>
            <person name="Osoegawa K."/>
            <person name="Schwartz D.C."/>
            <person name="Shaw-Smith C."/>
            <person name="Stankiewicz P."/>
            <person name="Steward C."/>
            <person name="Swarbreck D."/>
            <person name="Venkataraman V."/>
            <person name="Whittaker C.A."/>
            <person name="Yang X."/>
            <person name="Zimmer A.R."/>
            <person name="Bradley A."/>
            <person name="Hubbard T."/>
            <person name="Birren B.W."/>
            <person name="Rogers J."/>
            <person name="Lander E.S."/>
            <person name="Nusbaum C."/>
        </authorList>
    </citation>
    <scope>NUCLEOTIDE SEQUENCE [LARGE SCALE GENOMIC DNA]</scope>
</reference>
<reference key="3">
    <citation type="journal article" date="2007" name="BMC Genomics">
        <title>The full-ORF clone resource of the German cDNA consortium.</title>
        <authorList>
            <person name="Bechtel S."/>
            <person name="Rosenfelder H."/>
            <person name="Duda A."/>
            <person name="Schmidt C.P."/>
            <person name="Ernst U."/>
            <person name="Wellenreuther R."/>
            <person name="Mehrle A."/>
            <person name="Schuster C."/>
            <person name="Bahr A."/>
            <person name="Bloecker H."/>
            <person name="Heubner D."/>
            <person name="Hoerlein A."/>
            <person name="Michel G."/>
            <person name="Wedler H."/>
            <person name="Koehrer K."/>
            <person name="Ottenwaelder B."/>
            <person name="Poustka A."/>
            <person name="Wiemann S."/>
            <person name="Schupp I."/>
        </authorList>
    </citation>
    <scope>NUCLEOTIDE SEQUENCE [LARGE SCALE MRNA] OF 703-753</scope>
    <source>
        <tissue>Stomach</tissue>
    </source>
</reference>
<reference key="4">
    <citation type="journal article" date="2011" name="J. Biol. Chem.">
        <title>A phosphodiesterase 3B-based signaling complex integrates exchange protein activated by cAMP 1 and phosphatidylinositol 3-kinase signals in human arterial endothelial cells.</title>
        <authorList>
            <person name="Wilson L.S."/>
            <person name="Baillie G.S."/>
            <person name="Pritchard L.M."/>
            <person name="Umana B."/>
            <person name="Terrin A."/>
            <person name="Zaccolo M."/>
            <person name="Houslay M.D."/>
            <person name="Maurice D.H."/>
        </authorList>
    </citation>
    <scope>FUNCTION</scope>
    <scope>INTERACTION WITH PDE3B AND RAPGEF3</scope>
</reference>
<evidence type="ECO:0000250" key="1">
    <source>
        <dbReference type="UniProtKB" id="Q3U6Q4"/>
    </source>
</evidence>
<evidence type="ECO:0000256" key="2">
    <source>
        <dbReference type="SAM" id="MobiDB-lite"/>
    </source>
</evidence>
<evidence type="ECO:0000269" key="3">
    <source>
    </source>
</evidence>
<feature type="chain" id="PRO_0000234338" description="Phosphoinositide 3-kinase regulatory subunit 6">
    <location>
        <begin position="1"/>
        <end position="754"/>
    </location>
</feature>
<feature type="region of interest" description="Disordered" evidence="2">
    <location>
        <begin position="343"/>
        <end position="363"/>
    </location>
</feature>
<keyword id="KW-0037">Angiogenesis</keyword>
<keyword id="KW-1003">Cell membrane</keyword>
<keyword id="KW-0963">Cytoplasm</keyword>
<keyword id="KW-0472">Membrane</keyword>
<keyword id="KW-1267">Proteomics identification</keyword>
<keyword id="KW-1185">Reference proteome</keyword>
<proteinExistence type="evidence at protein level"/>
<sequence length="754" mass="84258">MESSDVELDLQRSVQAVLRELSTQAPALQSNQGMWRWSLHKKVERDPGKSPVLVRILLRELEKAESQDLRHVIIPLLHTVMYVLTKATGITEELYQRIYAFCTRLLTLPTPYCTVALDCAIRLKTEMAVPGTLYQRMVIAEQNLTNELYPYQERVFLFVDPELVSASVCSALLLEIEAAQAQQTPETCMRHVVSHALQAALGEACHAGALHRKLQASPRRTLEHYFHAVVAALEQMASEASPSREGHVERLEEIYCSLLGPAAGRCGGDLVQERPPSIPLPSPYITFHLWTGEEQLWKELVLFLRPRSQLRLSADLEVLDLQGLRPDRELARVSVLSTDSGIERDLPTGADELPAPGSPEMERAGLQRKGGIKKRAWPLDFLMPGSWDGPPGLHRRTGRPSGDGEMLPGVSRLHTARVLVLGDDRMLGRLAQAYHRLRKRETQKFCLTPRLSLQLYYIPVLAPEKPAASRQPELGELATFLGRVDPWYQSNVNTLCPAIHKLAEMPPSLDTSRTVDPFILDVITYYIRMGTQPIYFQIYTVKIFFSDLSQDPTEDIFLIELKVKIQDSKFPKDGFSPRRRGVAEGPGAELSLCYQKALLSHRPREVTVSLRATGLILKAIPASDTEVSGSSHCPLPAAPVTDHTCLNVNVTEVVKSSNLAGKSFSTVTNTFRTNNIQIQSRDQRLLTLSLDKDDQRTFRDVVRFEVAPCPEPCSGAQKSKAPWLNLHGQQEVEAIKAKPKPLLMPINTFSGIVQ</sequence>
<gene>
    <name type="primary">PIK3R6</name>
    <name type="synonym">C17orf38</name>
</gene>
<organism>
    <name type="scientific">Homo sapiens</name>
    <name type="common">Human</name>
    <dbReference type="NCBI Taxonomy" id="9606"/>
    <lineage>
        <taxon>Eukaryota</taxon>
        <taxon>Metazoa</taxon>
        <taxon>Chordata</taxon>
        <taxon>Craniata</taxon>
        <taxon>Vertebrata</taxon>
        <taxon>Euteleostomi</taxon>
        <taxon>Mammalia</taxon>
        <taxon>Eutheria</taxon>
        <taxon>Euarchontoglires</taxon>
        <taxon>Primates</taxon>
        <taxon>Haplorrhini</taxon>
        <taxon>Catarrhini</taxon>
        <taxon>Hominidae</taxon>
        <taxon>Homo</taxon>
    </lineage>
</organism>
<dbReference type="EMBL" id="AY753192">
    <property type="protein sequence ID" value="AAV30085.1"/>
    <property type="molecule type" value="mRNA"/>
</dbReference>
<dbReference type="EMBL" id="AC003695">
    <property type="status" value="NOT_ANNOTATED_CDS"/>
    <property type="molecule type" value="Genomic_DNA"/>
</dbReference>
<dbReference type="EMBL" id="AC009451">
    <property type="status" value="NOT_ANNOTATED_CDS"/>
    <property type="molecule type" value="Genomic_DNA"/>
</dbReference>
<dbReference type="EMBL" id="AL833037">
    <property type="protein sequence ID" value="CAH56340.1"/>
    <property type="molecule type" value="mRNA"/>
</dbReference>
<dbReference type="CCDS" id="CCDS73985.1"/>
<dbReference type="RefSeq" id="NP_001010855.1">
    <property type="nucleotide sequence ID" value="NM_001010855.4"/>
</dbReference>
<dbReference type="RefSeq" id="XP_016879718.1">
    <property type="nucleotide sequence ID" value="XM_017024229.1"/>
</dbReference>
<dbReference type="SMR" id="Q5UE93"/>
<dbReference type="BioGRID" id="127016">
    <property type="interactions" value="18"/>
</dbReference>
<dbReference type="ComplexPortal" id="CPX-5987">
    <property type="entry name" value="Phosphatidylinositol 3-kinase complex class IB, p110gamma/p87"/>
</dbReference>
<dbReference type="FunCoup" id="Q5UE93">
    <property type="interactions" value="952"/>
</dbReference>
<dbReference type="IntAct" id="Q5UE93">
    <property type="interactions" value="12"/>
</dbReference>
<dbReference type="STRING" id="9606.ENSP00000480157"/>
<dbReference type="iPTMnet" id="Q5UE93"/>
<dbReference type="PhosphoSitePlus" id="Q5UE93"/>
<dbReference type="BioMuta" id="PIK3R6"/>
<dbReference type="DMDM" id="74746772"/>
<dbReference type="jPOST" id="Q5UE93"/>
<dbReference type="MassIVE" id="Q5UE93"/>
<dbReference type="PaxDb" id="9606-ENSP00000480157"/>
<dbReference type="PeptideAtlas" id="Q5UE93"/>
<dbReference type="ProteomicsDB" id="65246"/>
<dbReference type="Antibodypedia" id="74162">
    <property type="antibodies" value="103 antibodies from 27 providers"/>
</dbReference>
<dbReference type="DNASU" id="146850"/>
<dbReference type="Ensembl" id="ENST00000619866.5">
    <property type="protein sequence ID" value="ENSP00000480157.1"/>
    <property type="gene ID" value="ENSG00000276231.5"/>
</dbReference>
<dbReference type="GeneID" id="146850"/>
<dbReference type="KEGG" id="hsa:146850"/>
<dbReference type="MANE-Select" id="ENST00000619866.5">
    <property type="protein sequence ID" value="ENSP00000480157.1"/>
    <property type="RefSeq nucleotide sequence ID" value="NM_001010855.4"/>
    <property type="RefSeq protein sequence ID" value="NP_001010855.1"/>
</dbReference>
<dbReference type="UCSC" id="uc032etf.1">
    <property type="organism name" value="human"/>
</dbReference>
<dbReference type="AGR" id="HGNC:27101"/>
<dbReference type="CTD" id="146850"/>
<dbReference type="DisGeNET" id="146850"/>
<dbReference type="GeneCards" id="PIK3R6"/>
<dbReference type="HGNC" id="HGNC:27101">
    <property type="gene designation" value="PIK3R6"/>
</dbReference>
<dbReference type="HPA" id="ENSG00000276231">
    <property type="expression patterns" value="Tissue enhanced (lymphoid)"/>
</dbReference>
<dbReference type="MIM" id="611462">
    <property type="type" value="gene"/>
</dbReference>
<dbReference type="neXtProt" id="NX_Q5UE93"/>
<dbReference type="OpenTargets" id="ENSG00000276231"/>
<dbReference type="PharmGKB" id="PA162399570"/>
<dbReference type="VEuPathDB" id="HostDB:ENSG00000276231"/>
<dbReference type="eggNOG" id="ENOG502QSK4">
    <property type="taxonomic scope" value="Eukaryota"/>
</dbReference>
<dbReference type="GeneTree" id="ENSGT00530000063753"/>
<dbReference type="HOGENOM" id="CLU_023662_0_0_1"/>
<dbReference type="InParanoid" id="Q5UE93"/>
<dbReference type="OMA" id="MPACWDG"/>
<dbReference type="OrthoDB" id="8781591at2759"/>
<dbReference type="PAN-GO" id="Q5UE93">
    <property type="GO annotations" value="4 GO annotations based on evolutionary models"/>
</dbReference>
<dbReference type="PhylomeDB" id="Q5UE93"/>
<dbReference type="BioCyc" id="MetaCyc:ENSG00000174083-MONOMER"/>
<dbReference type="PathwayCommons" id="Q5UE93"/>
<dbReference type="Reactome" id="R-HSA-114604">
    <property type="pathway name" value="GPVI-mediated activation cascade"/>
</dbReference>
<dbReference type="Reactome" id="R-HSA-1257604">
    <property type="pathway name" value="PIP3 activates AKT signaling"/>
</dbReference>
<dbReference type="Reactome" id="R-HSA-1660499">
    <property type="pathway name" value="Synthesis of PIPs at the plasma membrane"/>
</dbReference>
<dbReference type="Reactome" id="R-HSA-2219530">
    <property type="pathway name" value="Constitutive Signaling by Aberrant PI3K in Cancer"/>
</dbReference>
<dbReference type="Reactome" id="R-HSA-389357">
    <property type="pathway name" value="CD28 dependent PI3K/Akt signaling"/>
</dbReference>
<dbReference type="Reactome" id="R-HSA-392451">
    <property type="pathway name" value="G beta:gamma signalling through PI3Kgamma"/>
</dbReference>
<dbReference type="Reactome" id="R-HSA-6811558">
    <property type="pathway name" value="PI5P, PP2A and IER3 Regulate PI3K/AKT Signaling"/>
</dbReference>
<dbReference type="Reactome" id="R-HSA-9927354">
    <property type="pathway name" value="Co-stimulation by ICOS"/>
</dbReference>
<dbReference type="SignaLink" id="Q5UE93"/>
<dbReference type="SIGNOR" id="Q5UE93"/>
<dbReference type="BioGRID-ORCS" id="146850">
    <property type="hits" value="10 hits in 298 CRISPR screens"/>
</dbReference>
<dbReference type="CD-CODE" id="91857CE7">
    <property type="entry name" value="Nucleolus"/>
</dbReference>
<dbReference type="ChiTaRS" id="PIK3R6">
    <property type="organism name" value="human"/>
</dbReference>
<dbReference type="GenomeRNAi" id="146850"/>
<dbReference type="Pharos" id="Q5UE93">
    <property type="development level" value="Tbio"/>
</dbReference>
<dbReference type="PRO" id="PR:Q5UE93"/>
<dbReference type="Proteomes" id="UP000005640">
    <property type="component" value="Chromosome 17"/>
</dbReference>
<dbReference type="RNAct" id="Q5UE93">
    <property type="molecule type" value="protein"/>
</dbReference>
<dbReference type="Bgee" id="ENSG00000276231">
    <property type="expression patterns" value="Expressed in granulocyte and 94 other cell types or tissues"/>
</dbReference>
<dbReference type="ExpressionAtlas" id="Q5UE93">
    <property type="expression patterns" value="baseline and differential"/>
</dbReference>
<dbReference type="GO" id="GO:0005829">
    <property type="term" value="C:cytosol"/>
    <property type="evidence" value="ECO:0000304"/>
    <property type="project" value="Reactome"/>
</dbReference>
<dbReference type="GO" id="GO:0016020">
    <property type="term" value="C:membrane"/>
    <property type="evidence" value="ECO:0000250"/>
    <property type="project" value="UniProtKB"/>
</dbReference>
<dbReference type="GO" id="GO:0005942">
    <property type="term" value="C:phosphatidylinositol 3-kinase complex"/>
    <property type="evidence" value="ECO:0000318"/>
    <property type="project" value="GO_Central"/>
</dbReference>
<dbReference type="GO" id="GO:0005943">
    <property type="term" value="C:phosphatidylinositol 3-kinase complex, class IA"/>
    <property type="evidence" value="ECO:0000269"/>
    <property type="project" value="ComplexPortal"/>
</dbReference>
<dbReference type="GO" id="GO:0005944">
    <property type="term" value="C:phosphatidylinositol 3-kinase complex, class IB"/>
    <property type="evidence" value="ECO:0000250"/>
    <property type="project" value="UniProtKB"/>
</dbReference>
<dbReference type="GO" id="GO:0005886">
    <property type="term" value="C:plasma membrane"/>
    <property type="evidence" value="ECO:0007669"/>
    <property type="project" value="UniProtKB-SubCell"/>
</dbReference>
<dbReference type="GO" id="GO:0046935">
    <property type="term" value="F:1-phosphatidylinositol-3-kinase regulator activity"/>
    <property type="evidence" value="ECO:0000250"/>
    <property type="project" value="UniProtKB"/>
</dbReference>
<dbReference type="GO" id="GO:0046934">
    <property type="term" value="F:1-phosphatidylinositol-4,5-bisphosphate 3-kinase activity"/>
    <property type="evidence" value="ECO:0007669"/>
    <property type="project" value="Ensembl"/>
</dbReference>
<dbReference type="GO" id="GO:0001525">
    <property type="term" value="P:angiogenesis"/>
    <property type="evidence" value="ECO:0007669"/>
    <property type="project" value="UniProtKB-KW"/>
</dbReference>
<dbReference type="GO" id="GO:0007186">
    <property type="term" value="P:G protein-coupled receptor signaling pathway"/>
    <property type="evidence" value="ECO:0000269"/>
    <property type="project" value="ComplexPortal"/>
</dbReference>
<dbReference type="GO" id="GO:0006955">
    <property type="term" value="P:immune response"/>
    <property type="evidence" value="ECO:0000303"/>
    <property type="project" value="ComplexPortal"/>
</dbReference>
<dbReference type="GO" id="GO:0045766">
    <property type="term" value="P:positive regulation of angiogenesis"/>
    <property type="evidence" value="ECO:0000315"/>
    <property type="project" value="UniProtKB"/>
</dbReference>
<dbReference type="GO" id="GO:0043406">
    <property type="term" value="P:positive regulation of MAP kinase activity"/>
    <property type="evidence" value="ECO:0000250"/>
    <property type="project" value="UniProtKB"/>
</dbReference>
<dbReference type="GO" id="GO:0045582">
    <property type="term" value="P:positive regulation of T cell differentiation"/>
    <property type="evidence" value="ECO:0007669"/>
    <property type="project" value="Ensembl"/>
</dbReference>
<dbReference type="GO" id="GO:0042269">
    <property type="term" value="P:regulation of natural killer cell mediated cytotoxicity"/>
    <property type="evidence" value="ECO:0000314"/>
    <property type="project" value="CACAO"/>
</dbReference>
<dbReference type="InterPro" id="IPR019522">
    <property type="entry name" value="PIK3R5/6"/>
</dbReference>
<dbReference type="PANTHER" id="PTHR15593">
    <property type="entry name" value="PHOSPHATIDYLINOSITOL 3-KINASE REGULATORY SUBUNIT"/>
    <property type="match status" value="1"/>
</dbReference>
<dbReference type="PANTHER" id="PTHR15593:SF1">
    <property type="entry name" value="PHOSPHOINOSITIDE 3-KINASE REGULATORY SUBUNIT 6"/>
    <property type="match status" value="1"/>
</dbReference>
<dbReference type="Pfam" id="PF10486">
    <property type="entry name" value="PI3K_1B_p101"/>
    <property type="match status" value="3"/>
</dbReference>